<comment type="function">
    <text evidence="4 6 7">Excitatory neurotransmitters that directly modulate chromatophore function by activating chromatophore expansion at the chromatophore neuromuscular junction.</text>
</comment>
<comment type="subcellular location">
    <subcellularLocation>
        <location evidence="4">Secreted</location>
    </subcellularLocation>
</comment>
<comment type="tissue specificity">
    <text evidence="4 7">Present ubiquitously in the brain and regions of the central nervous system as well as in the periphery and throughout the dermal chromatophore layer (at protein level).</text>
</comment>
<comment type="mass spectrometry">
    <molecule>FIRF-amide</molecule>
    <text>FIRF-amide.</text>
</comment>
<comment type="mass spectrometry">
    <molecule>ALSGDAFLRF-amide</molecule>
    <text>ALSGDAFLRF-amide.</text>
</comment>
<comment type="mass spectrometry">
    <molecule>FLRF-amide</molecule>
    <text>FLRF-amide.</text>
</comment>
<comment type="mass spectrometry">
    <molecule>FMRF-amide 1</molecule>
    <text>FMRF-amide 1.</text>
</comment>
<comment type="mass spectrometry">
    <molecule>FMRF-amide 2</molecule>
    <text>FMRF-amide 2.</text>
</comment>
<comment type="mass spectrometry">
    <molecule>FMRF-amide 3</molecule>
    <text>FMRF-amide 3.</text>
</comment>
<comment type="mass spectrometry">
    <molecule>FMRF-amide 4</molecule>
    <text>FMRF-amide 4.</text>
</comment>
<comment type="mass spectrometry">
    <molecule>FMRF-amide 5</molecule>
    <text>FMRF-amide 5.</text>
</comment>
<comment type="mass spectrometry">
    <molecule>FMRF-amide 6</molecule>
    <text>FMRF-amide 6.</text>
</comment>
<comment type="mass spectrometry">
    <molecule>FMRF-amide 7</molecule>
    <text>FMRF-amide 7.</text>
</comment>
<comment type="mass spectrometry">
    <molecule>FMRF-amide 8</molecule>
    <text>FMRF-amide 8.</text>
</comment>
<comment type="mass spectrometry">
    <molecule>FMRF-amide 9</molecule>
    <text>FMRF-amide 9.</text>
</comment>
<comment type="mass spectrometry">
    <molecule>FMRF-amide 10</molecule>
    <text>FMRF-amide 10.</text>
</comment>
<comment type="mass spectrometry">
    <molecule>FMRF-amide 11</molecule>
    <text>FMRF-amide 11.</text>
</comment>
<comment type="similarity">
    <text evidence="2">Belongs to the FARP (FMRFamide related peptide) family.</text>
</comment>
<evidence type="ECO:0000250" key="1">
    <source>
        <dbReference type="UniProtKB" id="Q9GSL0"/>
    </source>
</evidence>
<evidence type="ECO:0000255" key="2"/>
<evidence type="ECO:0000256" key="3">
    <source>
        <dbReference type="SAM" id="MobiDB-lite"/>
    </source>
</evidence>
<evidence type="ECO:0000269" key="4">
    <source>
    </source>
</evidence>
<evidence type="ECO:0000269" key="5">
    <source>
    </source>
</evidence>
<evidence type="ECO:0000269" key="6">
    <source>
    </source>
</evidence>
<evidence type="ECO:0000269" key="7">
    <source>
    </source>
</evidence>
<evidence type="ECO:0000303" key="8">
    <source>
    </source>
</evidence>
<evidence type="ECO:0000303" key="9">
    <source>
    </source>
</evidence>
<evidence type="ECO:0000305" key="10"/>
<evidence type="ECO:0000312" key="11">
    <source>
        <dbReference type="EMBL" id="CAA72116.1"/>
    </source>
</evidence>
<feature type="signal peptide" evidence="2">
    <location>
        <begin position="1"/>
        <end position="25"/>
    </location>
</feature>
<feature type="propeptide" id="PRO_0000404053" evidence="5">
    <location>
        <begin position="26"/>
        <end position="65"/>
    </location>
</feature>
<feature type="peptide" id="PRO_0000404054" description="FIRF-amide" evidence="5">
    <location>
        <begin position="68"/>
        <end position="71"/>
    </location>
</feature>
<feature type="peptide" id="PRO_0000404055" description="ALSGDAFLRF-amide" evidence="5">
    <location>
        <begin position="74"/>
        <end position="83"/>
    </location>
</feature>
<feature type="propeptide" id="PRO_0000404056" evidence="5">
    <location>
        <begin position="86"/>
        <end position="94"/>
    </location>
</feature>
<feature type="peptide" id="PRO_0000404057" description="FLRF-amide" evidence="5">
    <location>
        <begin position="97"/>
        <end position="100"/>
    </location>
</feature>
<feature type="propeptide" id="PRO_0000404058" evidence="5">
    <location>
        <begin position="103"/>
        <end position="168"/>
    </location>
</feature>
<feature type="peptide" id="PRO_0000404059" description="FMRF-amide 1" evidence="5">
    <location>
        <begin position="171"/>
        <end position="174"/>
    </location>
</feature>
<feature type="peptide" id="PRO_0000404060" description="FMRF-amide 2" evidence="5">
    <location>
        <begin position="178"/>
        <end position="181"/>
    </location>
</feature>
<feature type="propeptide" id="PRO_0000404061" evidence="5">
    <location>
        <begin position="184"/>
        <end position="194"/>
    </location>
</feature>
<feature type="peptide" id="PRO_0000404062" description="FMRF-amide 3" evidence="5">
    <location>
        <begin position="197"/>
        <end position="200"/>
    </location>
</feature>
<feature type="propeptide" id="PRO_0000404063" evidence="5">
    <location>
        <begin position="203"/>
        <end position="205"/>
    </location>
</feature>
<feature type="peptide" id="PRO_0000404064" description="FMRF-amide 4" evidence="5">
    <location>
        <begin position="208"/>
        <end position="211"/>
    </location>
</feature>
<feature type="propeptide" id="PRO_0000404065" evidence="5">
    <location>
        <begin position="214"/>
        <end position="216"/>
    </location>
</feature>
<feature type="peptide" id="PRO_0000404066" description="FMRF-amide 5" evidence="5">
    <location>
        <begin position="219"/>
        <end position="222"/>
    </location>
</feature>
<feature type="propeptide" id="PRO_0000404067" evidence="5">
    <location>
        <begin position="225"/>
        <end position="236"/>
    </location>
</feature>
<feature type="peptide" id="PRO_0000404068" description="FMRF-amide 6" evidence="5">
    <location>
        <begin position="239"/>
        <end position="242"/>
    </location>
</feature>
<feature type="propeptide" id="PRO_0000404069" evidence="5">
    <location>
        <begin position="245"/>
        <end position="254"/>
    </location>
</feature>
<feature type="peptide" id="PRO_0000404070" description="FMRF-amide 7" evidence="5">
    <location>
        <begin position="257"/>
        <end position="260"/>
    </location>
</feature>
<feature type="propeptide" id="PRO_0000404071" evidence="5">
    <location>
        <begin position="263"/>
        <end position="265"/>
    </location>
</feature>
<feature type="peptide" id="PRO_0000404072" description="FMRF-amide 8" evidence="5">
    <location>
        <begin position="268"/>
        <end position="271"/>
    </location>
</feature>
<feature type="propeptide" id="PRO_0000404073" evidence="5">
    <location>
        <begin position="274"/>
        <end position="277"/>
    </location>
</feature>
<feature type="peptide" id="PRO_0000404074" description="FMRF-amide 9" evidence="5">
    <location>
        <begin position="280"/>
        <end position="283"/>
    </location>
</feature>
<feature type="propeptide" id="PRO_0000404075" evidence="5">
    <location>
        <begin position="286"/>
        <end position="293"/>
    </location>
</feature>
<feature type="peptide" id="PRO_0000404076" description="FMRF-amide 10" evidence="5">
    <location>
        <begin position="296"/>
        <end position="299"/>
    </location>
</feature>
<feature type="propeptide" id="PRO_0000404077" evidence="5">
    <location>
        <begin position="302"/>
        <end position="312"/>
    </location>
</feature>
<feature type="peptide" id="PRO_0000404078" description="FMRF-amide 11" evidence="5">
    <location>
        <begin position="315"/>
        <end position="318"/>
    </location>
</feature>
<feature type="propeptide" id="PRO_0000404079" evidence="5">
    <location>
        <begin position="321"/>
        <end position="331"/>
    </location>
</feature>
<feature type="region of interest" description="Disordered" evidence="3">
    <location>
        <begin position="122"/>
        <end position="153"/>
    </location>
</feature>
<feature type="modified residue" description="Phenylalanine amide" evidence="1">
    <location>
        <position position="71"/>
    </location>
</feature>
<feature type="modified residue" description="Phenylalanine amide" evidence="1">
    <location>
        <position position="83"/>
    </location>
</feature>
<feature type="modified residue" description="Phenylalanine amide" evidence="1">
    <location>
        <position position="100"/>
    </location>
</feature>
<feature type="modified residue" description="Phenylalanine amide" evidence="1">
    <location>
        <position position="174"/>
    </location>
</feature>
<feature type="modified residue" description="Phenylalanine amide" evidence="1">
    <location>
        <position position="181"/>
    </location>
</feature>
<feature type="modified residue" description="Phenylalanine amide" evidence="1">
    <location>
        <position position="200"/>
    </location>
</feature>
<feature type="modified residue" description="Phenylalanine amide" evidence="1">
    <location>
        <position position="211"/>
    </location>
</feature>
<feature type="modified residue" description="Phenylalanine amide" evidence="1">
    <location>
        <position position="222"/>
    </location>
</feature>
<feature type="modified residue" description="Phenylalanine amide" evidence="1">
    <location>
        <position position="242"/>
    </location>
</feature>
<feature type="modified residue" description="Phenylalanine amide" evidence="1">
    <location>
        <position position="260"/>
    </location>
</feature>
<feature type="modified residue" description="Phenylalanine amide" evidence="1">
    <location>
        <position position="271"/>
    </location>
</feature>
<feature type="modified residue" description="Phenylalanine amide" evidence="1">
    <location>
        <position position="283"/>
    </location>
</feature>
<feature type="modified residue" description="Phenylalanine amide" evidence="1">
    <location>
        <position position="299"/>
    </location>
</feature>
<feature type="modified residue" description="Phenylalanine amide" evidence="1">
    <location>
        <position position="318"/>
    </location>
</feature>
<keyword id="KW-0027">Amidation</keyword>
<keyword id="KW-0165">Cleavage on pair of basic residues</keyword>
<keyword id="KW-0527">Neuropeptide</keyword>
<keyword id="KW-0677">Repeat</keyword>
<keyword id="KW-0964">Secreted</keyword>
<keyword id="KW-0732">Signal</keyword>
<reference evidence="10 11" key="1">
    <citation type="journal article" date="1997" name="J. Exp. Biol.">
        <title>Molecular analysis of FMRFamide- and FMRFamide-related peptides (FaRPS) in the cuttlefish Sepia officinalis.</title>
        <authorList>
            <person name="Loi P.K."/>
            <person name="Tublitz N."/>
        </authorList>
    </citation>
    <scope>NUCLEOTIDE SEQUENCE [MRNA]</scope>
    <scope>FUNCTION</scope>
    <source>
        <tissue evidence="6">Brain</tissue>
    </source>
</reference>
<reference evidence="10" key="2">
    <citation type="journal article" date="1996" name="J. Exp. Biol.">
        <title>Peptidergic regulation of chromatophore function in the European cuttlefish Sepia officinalis.</title>
        <authorList>
            <person name="Loi P."/>
            <person name="Saunders R."/>
            <person name="Young D."/>
            <person name="Tublitz N."/>
        </authorList>
    </citation>
    <scope>FUNCTION</scope>
    <scope>TISSUE SPECIFICITY</scope>
</reference>
<reference evidence="10" key="3">
    <citation type="journal article" date="2000" name="J. Comp. Neurol.">
        <title>Roles of glutamate and FMRFamide-related peptides at the chromatophore neuromuscular junction in the cuttlefish, Sepia officinalis.</title>
        <authorList>
            <person name="Loi P.K."/>
            <person name="Tublitz N.J."/>
        </authorList>
    </citation>
    <scope>FUNCTION</scope>
    <scope>SUBCELLULAR LOCATION</scope>
    <scope>TISSUE SPECIFICITY</scope>
</reference>
<reference evidence="10" key="4">
    <citation type="journal article" date="2000" name="J. Exp. Biol.">
        <title>Mass spectrometric survey of peptides in cephalopods with an emphasis on the FMRFamide-related peptides.</title>
        <authorList>
            <person name="Sweedler J.V."/>
            <person name="Li L."/>
            <person name="Floyd P."/>
            <person name="Gilly W."/>
        </authorList>
    </citation>
    <scope>MASS SPECTROMETRY</scope>
</reference>
<protein>
    <recommendedName>
        <fullName evidence="8 9 11">FMRFamide-related neuropeptides</fullName>
    </recommendedName>
    <component>
        <recommendedName>
            <fullName evidence="8 9">FIRF-amide</fullName>
        </recommendedName>
    </component>
    <component>
        <recommendedName>
            <fullName evidence="8 9">ALSGDAFLRF-amide</fullName>
        </recommendedName>
    </component>
    <component>
        <recommendedName>
            <fullName evidence="8 9">FLRF-amide</fullName>
        </recommendedName>
    </component>
    <component>
        <recommendedName>
            <fullName evidence="8 9">FMRF-amide 1</fullName>
        </recommendedName>
    </component>
    <component>
        <recommendedName>
            <fullName evidence="8 9">FMRF-amide 2</fullName>
        </recommendedName>
    </component>
    <component>
        <recommendedName>
            <fullName evidence="8 9">FMRF-amide 3</fullName>
        </recommendedName>
    </component>
    <component>
        <recommendedName>
            <fullName evidence="8 9">FMRF-amide 4</fullName>
        </recommendedName>
    </component>
    <component>
        <recommendedName>
            <fullName evidence="8 9">FMRF-amide 5</fullName>
        </recommendedName>
    </component>
    <component>
        <recommendedName>
            <fullName evidence="8 9">FMRF-amide 6</fullName>
        </recommendedName>
    </component>
    <component>
        <recommendedName>
            <fullName evidence="8 9">FMRF-amide 7</fullName>
        </recommendedName>
    </component>
    <component>
        <recommendedName>
            <fullName evidence="8 9">FMRF-amide 8</fullName>
        </recommendedName>
    </component>
    <component>
        <recommendedName>
            <fullName evidence="8 9">FMRF-amide 9</fullName>
        </recommendedName>
    </component>
    <component>
        <recommendedName>
            <fullName evidence="8 9">FMRF-amide 10</fullName>
        </recommendedName>
    </component>
    <component>
        <recommendedName>
            <fullName evidence="8 9">FMRF-amide 11</fullName>
        </recommendedName>
    </component>
</protein>
<proteinExistence type="evidence at protein level"/>
<name>FMRF_SEPOF</name>
<organism>
    <name type="scientific">Sepia officinalis</name>
    <name type="common">Common cuttlefish</name>
    <dbReference type="NCBI Taxonomy" id="6610"/>
    <lineage>
        <taxon>Eukaryota</taxon>
        <taxon>Metazoa</taxon>
        <taxon>Spiralia</taxon>
        <taxon>Lophotrochozoa</taxon>
        <taxon>Mollusca</taxon>
        <taxon>Cephalopoda</taxon>
        <taxon>Coleoidea</taxon>
        <taxon>Decapodiformes</taxon>
        <taxon>Sepiida</taxon>
        <taxon>Sepiina</taxon>
        <taxon>Sepiidae</taxon>
        <taxon>Sepia</taxon>
    </lineage>
</organism>
<gene>
    <name evidence="8" type="primary">FMRFa</name>
</gene>
<sequence>MRCWSPCSLLVVIAIYCLSSHTSEAFDLAQACVESQRLSLLPICDTIFAVQQEGAQQSADDGLRSKRFIRFGRALSGDAFLRFGKNVPDLPFEDKRFLRFGRAAPQLDDLLKQALQRVESLQKSDDTSVRRKRSTDAAPQSNTDSAEQKNDSAKITKRYVDDVEDSDVKRFMRFGKRFMRFGRNPSDVGSKLTEKRFMRFGRDPEKRFMRFGKSDDKKFMRFGRNPGDAEDELEEDKRFMRFGRGDEEDEEEAEKRFMRFGRDPEKKFMRFGKNGEEKRFMRFGRNPEEPEADKRFMRFGRGGEEDDVNTEEKRFMRFGRSAEKCKGCLEG</sequence>
<dbReference type="EMBL" id="Y11246">
    <property type="protein sequence ID" value="CAA72116.1"/>
    <property type="molecule type" value="mRNA"/>
</dbReference>
<dbReference type="GO" id="GO:0005576">
    <property type="term" value="C:extracellular region"/>
    <property type="evidence" value="ECO:0007669"/>
    <property type="project" value="UniProtKB-SubCell"/>
</dbReference>
<dbReference type="GO" id="GO:0007218">
    <property type="term" value="P:neuropeptide signaling pathway"/>
    <property type="evidence" value="ECO:0007669"/>
    <property type="project" value="UniProtKB-KW"/>
</dbReference>
<dbReference type="InterPro" id="IPR002544">
    <property type="entry name" value="FMRFamid-related_peptide-like"/>
</dbReference>
<dbReference type="InterPro" id="IPR051041">
    <property type="entry name" value="FMRFamide-related_np"/>
</dbReference>
<dbReference type="PANTHER" id="PTHR20986">
    <property type="entry name" value="FMRFAMIDE-RELATED PEPTIDES"/>
    <property type="match status" value="1"/>
</dbReference>
<dbReference type="PANTHER" id="PTHR20986:SF22">
    <property type="entry name" value="FMRFAMIDE-RELATED PEPTIDES"/>
    <property type="match status" value="1"/>
</dbReference>
<dbReference type="Pfam" id="PF01581">
    <property type="entry name" value="FARP"/>
    <property type="match status" value="13"/>
</dbReference>
<accession>P91889</accession>